<proteinExistence type="inferred from homology"/>
<gene>
    <name evidence="1" type="primary">nadK</name>
    <name type="ordered locus">R01333</name>
    <name type="ORF">SMc01331</name>
</gene>
<evidence type="ECO:0000255" key="1">
    <source>
        <dbReference type="HAMAP-Rule" id="MF_00361"/>
    </source>
</evidence>
<dbReference type="EC" id="2.7.1.23" evidence="1"/>
<dbReference type="EMBL" id="AL591688">
    <property type="protein sequence ID" value="CAC45912.1"/>
    <property type="molecule type" value="Genomic_DNA"/>
</dbReference>
<dbReference type="RefSeq" id="NP_385439.1">
    <property type="nucleotide sequence ID" value="NC_003047.1"/>
</dbReference>
<dbReference type="RefSeq" id="WP_003533093.1">
    <property type="nucleotide sequence ID" value="NC_003047.1"/>
</dbReference>
<dbReference type="SMR" id="Q92QJ0"/>
<dbReference type="EnsemblBacteria" id="CAC45912">
    <property type="protein sequence ID" value="CAC45912"/>
    <property type="gene ID" value="SMc01331"/>
</dbReference>
<dbReference type="KEGG" id="sme:SMc01331"/>
<dbReference type="PATRIC" id="fig|266834.11.peg.2748"/>
<dbReference type="eggNOG" id="COG0061">
    <property type="taxonomic scope" value="Bacteria"/>
</dbReference>
<dbReference type="HOGENOM" id="CLU_073319_0_0_5"/>
<dbReference type="OrthoDB" id="9774737at2"/>
<dbReference type="Proteomes" id="UP000001976">
    <property type="component" value="Chromosome"/>
</dbReference>
<dbReference type="GO" id="GO:0005737">
    <property type="term" value="C:cytoplasm"/>
    <property type="evidence" value="ECO:0007669"/>
    <property type="project" value="UniProtKB-SubCell"/>
</dbReference>
<dbReference type="GO" id="GO:0005524">
    <property type="term" value="F:ATP binding"/>
    <property type="evidence" value="ECO:0007669"/>
    <property type="project" value="UniProtKB-KW"/>
</dbReference>
<dbReference type="GO" id="GO:0046872">
    <property type="term" value="F:metal ion binding"/>
    <property type="evidence" value="ECO:0007669"/>
    <property type="project" value="UniProtKB-UniRule"/>
</dbReference>
<dbReference type="GO" id="GO:0051287">
    <property type="term" value="F:NAD binding"/>
    <property type="evidence" value="ECO:0007669"/>
    <property type="project" value="UniProtKB-ARBA"/>
</dbReference>
<dbReference type="GO" id="GO:0003951">
    <property type="term" value="F:NAD+ kinase activity"/>
    <property type="evidence" value="ECO:0007669"/>
    <property type="project" value="UniProtKB-UniRule"/>
</dbReference>
<dbReference type="GO" id="GO:0019674">
    <property type="term" value="P:NAD metabolic process"/>
    <property type="evidence" value="ECO:0007669"/>
    <property type="project" value="InterPro"/>
</dbReference>
<dbReference type="GO" id="GO:0006741">
    <property type="term" value="P:NADP biosynthetic process"/>
    <property type="evidence" value="ECO:0007669"/>
    <property type="project" value="UniProtKB-UniRule"/>
</dbReference>
<dbReference type="Gene3D" id="3.40.50.10330">
    <property type="entry name" value="Probable inorganic polyphosphate/atp-NAD kinase, domain 1"/>
    <property type="match status" value="1"/>
</dbReference>
<dbReference type="Gene3D" id="2.60.200.30">
    <property type="entry name" value="Probable inorganic polyphosphate/atp-NAD kinase, domain 2"/>
    <property type="match status" value="1"/>
</dbReference>
<dbReference type="HAMAP" id="MF_00361">
    <property type="entry name" value="NAD_kinase"/>
    <property type="match status" value="1"/>
</dbReference>
<dbReference type="InterPro" id="IPR017438">
    <property type="entry name" value="ATP-NAD_kinase_N"/>
</dbReference>
<dbReference type="InterPro" id="IPR017437">
    <property type="entry name" value="ATP-NAD_kinase_PpnK-typ_C"/>
</dbReference>
<dbReference type="InterPro" id="IPR016064">
    <property type="entry name" value="NAD/diacylglycerol_kinase_sf"/>
</dbReference>
<dbReference type="InterPro" id="IPR002504">
    <property type="entry name" value="NADK"/>
</dbReference>
<dbReference type="NCBIfam" id="NF003406">
    <property type="entry name" value="PRK04761.1"/>
    <property type="match status" value="1"/>
</dbReference>
<dbReference type="PANTHER" id="PTHR20275">
    <property type="entry name" value="NAD KINASE"/>
    <property type="match status" value="1"/>
</dbReference>
<dbReference type="PANTHER" id="PTHR20275:SF0">
    <property type="entry name" value="NAD KINASE"/>
    <property type="match status" value="1"/>
</dbReference>
<dbReference type="Pfam" id="PF01513">
    <property type="entry name" value="NAD_kinase"/>
    <property type="match status" value="1"/>
</dbReference>
<dbReference type="Pfam" id="PF20143">
    <property type="entry name" value="NAD_kinase_C"/>
    <property type="match status" value="1"/>
</dbReference>
<dbReference type="SUPFAM" id="SSF111331">
    <property type="entry name" value="NAD kinase/diacylglycerol kinase-like"/>
    <property type="match status" value="1"/>
</dbReference>
<organism>
    <name type="scientific">Rhizobium meliloti (strain 1021)</name>
    <name type="common">Ensifer meliloti</name>
    <name type="synonym">Sinorhizobium meliloti</name>
    <dbReference type="NCBI Taxonomy" id="266834"/>
    <lineage>
        <taxon>Bacteria</taxon>
        <taxon>Pseudomonadati</taxon>
        <taxon>Pseudomonadota</taxon>
        <taxon>Alphaproteobacteria</taxon>
        <taxon>Hyphomicrobiales</taxon>
        <taxon>Rhizobiaceae</taxon>
        <taxon>Sinorhizobium/Ensifer group</taxon>
        <taxon>Sinorhizobium</taxon>
    </lineage>
</organism>
<name>NADK_RHIME</name>
<keyword id="KW-0067">ATP-binding</keyword>
<keyword id="KW-0963">Cytoplasm</keyword>
<keyword id="KW-0418">Kinase</keyword>
<keyword id="KW-0520">NAD</keyword>
<keyword id="KW-0521">NADP</keyword>
<keyword id="KW-0547">Nucleotide-binding</keyword>
<keyword id="KW-1185">Reference proteome</keyword>
<keyword id="KW-0808">Transferase</keyword>
<reference key="1">
    <citation type="journal article" date="2001" name="Proc. Natl. Acad. Sci. U.S.A.">
        <title>Analysis of the chromosome sequence of the legume symbiont Sinorhizobium meliloti strain 1021.</title>
        <authorList>
            <person name="Capela D."/>
            <person name="Barloy-Hubler F."/>
            <person name="Gouzy J."/>
            <person name="Bothe G."/>
            <person name="Ampe F."/>
            <person name="Batut J."/>
            <person name="Boistard P."/>
            <person name="Becker A."/>
            <person name="Boutry M."/>
            <person name="Cadieu E."/>
            <person name="Dreano S."/>
            <person name="Gloux S."/>
            <person name="Godrie T."/>
            <person name="Goffeau A."/>
            <person name="Kahn D."/>
            <person name="Kiss E."/>
            <person name="Lelaure V."/>
            <person name="Masuy D."/>
            <person name="Pohl T."/>
            <person name="Portetelle D."/>
            <person name="Puehler A."/>
            <person name="Purnelle B."/>
            <person name="Ramsperger U."/>
            <person name="Renard C."/>
            <person name="Thebault P."/>
            <person name="Vandenbol M."/>
            <person name="Weidner S."/>
            <person name="Galibert F."/>
        </authorList>
    </citation>
    <scope>NUCLEOTIDE SEQUENCE [LARGE SCALE GENOMIC DNA]</scope>
    <source>
        <strain>1021</strain>
    </source>
</reference>
<reference key="2">
    <citation type="journal article" date="2001" name="Science">
        <title>The composite genome of the legume symbiont Sinorhizobium meliloti.</title>
        <authorList>
            <person name="Galibert F."/>
            <person name="Finan T.M."/>
            <person name="Long S.R."/>
            <person name="Puehler A."/>
            <person name="Abola P."/>
            <person name="Ampe F."/>
            <person name="Barloy-Hubler F."/>
            <person name="Barnett M.J."/>
            <person name="Becker A."/>
            <person name="Boistard P."/>
            <person name="Bothe G."/>
            <person name="Boutry M."/>
            <person name="Bowser L."/>
            <person name="Buhrmester J."/>
            <person name="Cadieu E."/>
            <person name="Capela D."/>
            <person name="Chain P."/>
            <person name="Cowie A."/>
            <person name="Davis R.W."/>
            <person name="Dreano S."/>
            <person name="Federspiel N.A."/>
            <person name="Fisher R.F."/>
            <person name="Gloux S."/>
            <person name="Godrie T."/>
            <person name="Goffeau A."/>
            <person name="Golding B."/>
            <person name="Gouzy J."/>
            <person name="Gurjal M."/>
            <person name="Hernandez-Lucas I."/>
            <person name="Hong A."/>
            <person name="Huizar L."/>
            <person name="Hyman R.W."/>
            <person name="Jones T."/>
            <person name="Kahn D."/>
            <person name="Kahn M.L."/>
            <person name="Kalman S."/>
            <person name="Keating D.H."/>
            <person name="Kiss E."/>
            <person name="Komp C."/>
            <person name="Lelaure V."/>
            <person name="Masuy D."/>
            <person name="Palm C."/>
            <person name="Peck M.C."/>
            <person name="Pohl T.M."/>
            <person name="Portetelle D."/>
            <person name="Purnelle B."/>
            <person name="Ramsperger U."/>
            <person name="Surzycki R."/>
            <person name="Thebault P."/>
            <person name="Vandenbol M."/>
            <person name="Vorhoelter F.J."/>
            <person name="Weidner S."/>
            <person name="Wells D.H."/>
            <person name="Wong K."/>
            <person name="Yeh K.-C."/>
            <person name="Batut J."/>
        </authorList>
    </citation>
    <scope>NUCLEOTIDE SEQUENCE [LARGE SCALE GENOMIC DNA]</scope>
    <source>
        <strain>1021</strain>
    </source>
</reference>
<feature type="chain" id="PRO_0000120651" description="NAD kinase">
    <location>
        <begin position="1"/>
        <end position="257"/>
    </location>
</feature>
<feature type="active site" description="Proton acceptor" evidence="1">
    <location>
        <position position="46"/>
    </location>
</feature>
<feature type="binding site" evidence="1">
    <location>
        <begin position="46"/>
        <end position="47"/>
    </location>
    <ligand>
        <name>NAD(+)</name>
        <dbReference type="ChEBI" id="CHEBI:57540"/>
    </ligand>
</feature>
<feature type="binding site" evidence="1">
    <location>
        <position position="51"/>
    </location>
    <ligand>
        <name>NAD(+)</name>
        <dbReference type="ChEBI" id="CHEBI:57540"/>
    </ligand>
</feature>
<feature type="binding site" evidence="1">
    <location>
        <begin position="116"/>
        <end position="117"/>
    </location>
    <ligand>
        <name>NAD(+)</name>
        <dbReference type="ChEBI" id="CHEBI:57540"/>
    </ligand>
</feature>
<feature type="binding site" evidence="1">
    <location>
        <position position="146"/>
    </location>
    <ligand>
        <name>NAD(+)</name>
        <dbReference type="ChEBI" id="CHEBI:57540"/>
    </ligand>
</feature>
<feature type="binding site" evidence="1">
    <location>
        <position position="154"/>
    </location>
    <ligand>
        <name>NAD(+)</name>
        <dbReference type="ChEBI" id="CHEBI:57540"/>
    </ligand>
</feature>
<feature type="binding site" evidence="1">
    <location>
        <begin position="157"/>
        <end position="162"/>
    </location>
    <ligand>
        <name>NAD(+)</name>
        <dbReference type="ChEBI" id="CHEBI:57540"/>
    </ligand>
</feature>
<feature type="binding site" evidence="1">
    <location>
        <position position="218"/>
    </location>
    <ligand>
        <name>NAD(+)</name>
        <dbReference type="ChEBI" id="CHEBI:57540"/>
    </ligand>
</feature>
<sequence>MARKFNSLAFIASPAEEAQKAAEDLRAVYGDHDPDKADVIVALGGDGFMLHTLHRTMNTGKLVYGMNRGSVGFLMNRYSTENLHQRIANADENAFHPLEMRTTDVNGDKFTALAINEVYLFRQSYQAAKLKVMVDGKTRLDELTCDGLLLATPAGSTAYNLSAHGPILPLEAPLLALTPVSPFRPRRWRGALLPNHVTVDIEILEADKRPVNAVADHQEVKSVVHVRIAESEKLTARILSDPDHSWSDRILAEQFSN</sequence>
<comment type="function">
    <text evidence="1">Involved in the regulation of the intracellular balance of NAD and NADP, and is a key enzyme in the biosynthesis of NADP. Catalyzes specifically the phosphorylation on 2'-hydroxyl of the adenosine moiety of NAD to yield NADP.</text>
</comment>
<comment type="catalytic activity">
    <reaction evidence="1">
        <text>NAD(+) + ATP = ADP + NADP(+) + H(+)</text>
        <dbReference type="Rhea" id="RHEA:18629"/>
        <dbReference type="ChEBI" id="CHEBI:15378"/>
        <dbReference type="ChEBI" id="CHEBI:30616"/>
        <dbReference type="ChEBI" id="CHEBI:57540"/>
        <dbReference type="ChEBI" id="CHEBI:58349"/>
        <dbReference type="ChEBI" id="CHEBI:456216"/>
        <dbReference type="EC" id="2.7.1.23"/>
    </reaction>
</comment>
<comment type="cofactor">
    <cofactor evidence="1">
        <name>a divalent metal cation</name>
        <dbReference type="ChEBI" id="CHEBI:60240"/>
    </cofactor>
</comment>
<comment type="subcellular location">
    <subcellularLocation>
        <location evidence="1">Cytoplasm</location>
    </subcellularLocation>
</comment>
<comment type="similarity">
    <text evidence="1">Belongs to the NAD kinase family.</text>
</comment>
<protein>
    <recommendedName>
        <fullName evidence="1">NAD kinase</fullName>
        <ecNumber evidence="1">2.7.1.23</ecNumber>
    </recommendedName>
    <alternativeName>
        <fullName evidence="1">ATP-dependent NAD kinase</fullName>
    </alternativeName>
</protein>
<accession>Q92QJ0</accession>